<organism>
    <name type="scientific">Sulfolobus acidocaldarius (strain ATCC 33909 / DSM 639 / JCM 8929 / NBRC 15157 / NCIMB 11770)</name>
    <dbReference type="NCBI Taxonomy" id="330779"/>
    <lineage>
        <taxon>Archaea</taxon>
        <taxon>Thermoproteota</taxon>
        <taxon>Thermoprotei</taxon>
        <taxon>Sulfolobales</taxon>
        <taxon>Sulfolobaceae</taxon>
        <taxon>Sulfolobus</taxon>
    </lineage>
</organism>
<proteinExistence type="evidence at protein level"/>
<name>RAD50_SULAC</name>
<reference key="1">
    <citation type="journal article" date="1997" name="J. Mol. Evol.">
        <title>A protein related to eucaryal and bacterial DNA-motor proteins in the hyperthermophilic archaeon Sulfolobus acidocaldarius.</title>
        <authorList>
            <person name="Elie C."/>
            <person name="Baucher M.F."/>
            <person name="Fondrat C."/>
            <person name="Forterre P."/>
        </authorList>
    </citation>
    <scope>NUCLEOTIDE SEQUENCE [GENOMIC DNA]</scope>
    <source>
        <strain>ATCC 33909 / DSM 639 / JCM 8929 / NBRC 15157 / NCIMB 11770</strain>
    </source>
</reference>
<reference key="2">
    <citation type="journal article" date="2002" name="EMBO Rep.">
        <title>NurA, a novel 5'-3' nuclease gene linked to rad50 and mre11 homologs of thermophilic Archaea.</title>
        <authorList>
            <person name="Constantinesco F."/>
            <person name="Forterre P."/>
            <person name="Elie C."/>
        </authorList>
    </citation>
    <scope>NUCLEOTIDE SEQUENCE [GENOMIC DNA]</scope>
    <source>
        <strain>ATCC 33909 / DSM 639 / JCM 8929 / NBRC 15157 / NCIMB 11770</strain>
    </source>
</reference>
<reference key="3">
    <citation type="journal article" date="2005" name="J. Bacteriol.">
        <title>The genome of Sulfolobus acidocaldarius, a model organism of the Crenarchaeota.</title>
        <authorList>
            <person name="Chen L."/>
            <person name="Bruegger K."/>
            <person name="Skovgaard M."/>
            <person name="Redder P."/>
            <person name="She Q."/>
            <person name="Torarinsson E."/>
            <person name="Greve B."/>
            <person name="Awayez M."/>
            <person name="Zibat A."/>
            <person name="Klenk H.-P."/>
            <person name="Garrett R.A."/>
        </authorList>
    </citation>
    <scope>NUCLEOTIDE SEQUENCE [LARGE SCALE GENOMIC DNA]</scope>
    <source>
        <strain>ATCC 33909 / DSM 639 / JCM 8929 / NBRC 15157 / NCIMB 11770</strain>
    </source>
</reference>
<reference key="4">
    <citation type="journal article" date="2004" name="Nucleic Acids Res.">
        <title>A bipolar DNA helicase gene, herA, clusters with rad50, mre11 and nurA genes in thermophilic archaea.</title>
        <authorList>
            <person name="Constantinesco F."/>
            <person name="Forterre P."/>
            <person name="Koonin E.V."/>
            <person name="Aravind L."/>
            <person name="Elie C."/>
        </authorList>
    </citation>
    <scope>INDUCTION</scope>
    <source>
        <strain>ATCC 33909 / DSM 639 / JCM 8929 / NBRC 15157 / NCIMB 11770</strain>
    </source>
</reference>
<reference key="5">
    <citation type="journal article" date="2008" name="BMC Mol. Biol.">
        <title>The Mre11 protein interacts with both Rad50 and the HerA bipolar helicase and is recruited to DNA following gamma irradiation in the archaeon Sulfolobus acidocaldarius.</title>
        <authorList>
            <person name="Quaiser A."/>
            <person name="Constantinesco F."/>
            <person name="White M.F."/>
            <person name="Forterre P."/>
            <person name="Elie C."/>
        </authorList>
    </citation>
    <scope>INTERACTION WITH MRE11 AND HERA</scope>
    <source>
        <strain>ATCC 33909 / DSM 639 / JCM 8929 / NBRC 15157 / NCIMB 11770</strain>
    </source>
</reference>
<evidence type="ECO:0000255" key="1">
    <source>
        <dbReference type="HAMAP-Rule" id="MF_00449"/>
    </source>
</evidence>
<evidence type="ECO:0000269" key="2">
    <source>
    </source>
</evidence>
<evidence type="ECO:0000269" key="3">
    <source>
    </source>
</evidence>
<comment type="function">
    <text evidence="1">Part of the Rad50/Mre11 complex, which is involved in the early steps of DNA double-strand break (DSB) repair. The complex may facilitate opening of the processed DNA ends to aid in the recruitment of HerA and NurA. Rad50 controls the balance between DNA end bridging and DNA resection via ATP-dependent structural rearrangements of the Rad50/Mre11 complex.</text>
</comment>
<comment type="cofactor">
    <cofactor evidence="1">
        <name>Zn(2+)</name>
        <dbReference type="ChEBI" id="CHEBI:29105"/>
    </cofactor>
    <text evidence="1">Binds 1 zinc ion per homodimer.</text>
</comment>
<comment type="subunit">
    <text evidence="1 3">Homodimer. Forms a heterotetramer composed of two Mre11 subunits and two Rad50 subunits (By similarity). Interacts with Mre11 and HerA (PubMed:18294364).</text>
</comment>
<comment type="induction">
    <text evidence="2">Part of the nurA-rad50-mre11-herA operon, these genes are cotranscribed.</text>
</comment>
<comment type="domain">
    <text evidence="1">The two conserved Cys that bind zinc constitute the zinc-hook, which separates the large intramolecular coiled coil regions. The 2 Cys residues coordinate one molecule of zinc with the help of the 2 Cys residues of the zinc-hook of another Rad50 molecule, thereby forming a V-shaped homodimer.</text>
</comment>
<comment type="similarity">
    <text evidence="1">Belongs to the SMC family. RAD50 subfamily.</text>
</comment>
<gene>
    <name evidence="1" type="primary">rad50</name>
    <name type="ordered locus">Saci_0051</name>
</gene>
<keyword id="KW-0067">ATP-binding</keyword>
<keyword id="KW-0175">Coiled coil</keyword>
<keyword id="KW-0227">DNA damage</keyword>
<keyword id="KW-0234">DNA repair</keyword>
<keyword id="KW-0378">Hydrolase</keyword>
<keyword id="KW-0479">Metal-binding</keyword>
<keyword id="KW-0547">Nucleotide-binding</keyword>
<keyword id="KW-1185">Reference proteome</keyword>
<keyword id="KW-0862">Zinc</keyword>
<sequence length="886" mass="103858">MIIREIRLQNFLSHEDTTVKFEGSINVIIGNNGAGKSSIIDGILFGLFKRTNRDIGKNEELIKKGKKSGQVSIKFEINGDTYLIDRNVGETSRDTISLLKEGKIITLARQSTTVNNKIKEILGFDHKILMSTTIIGQGSVESVFSDFPEVMKELLKINKLEMLRESNGPIHSLIKVLTDRIRSLQSIKDILKREEAEIDRLKKEIEEIKVKLENIEREAKEKEDELNQYNTEFNRIKEIKVQYDILSGELSVVNKKIEEIALRLKDFEEKEKRYNKIETEVKELDENREKINTISSFKSILVQIDSLKSQINVVENDLKRKKEKLKRKKELEEKEKQYEEIEKRKKELEEKEKQYEEIEKRLTYVLKNIERQKNEIEKLNYVDTQDLENKIKDVSDRINQIDNELKGLLDRRGDLNGRKEQTLKIYNNLNSIEDDRCPICGRPLDSEHKAKIREEIKVQLLELNKQITALQARINSLIKEREELEATRNKLQLELQKRSKEKGIYEAKLKELQRLEEEKNKLQNEILSLLSYHQEFENIAEKEKELIDYHEEYLKNSDILEEDIQEQEQRLNELNSKLSELEKSYNDYKAKYQFLPADLKSLVSLEERIRRRISELEKLKIEYERLKEEITRMKGLKEEYEKLKEEEDALLNRISELGYSEKRYKQLEEIIDKLSKILSGIEADKGKIKGSLEEKIKNIEEKERNIEELRNKMNEESKLNLGISKLQKLREVLDNKHLQSHIMNIVRNQIENNVNEVIAKFDLSFSAVEIDFVGKSELYVYTASGQKIHINALSGGERISIALALRLAIAKALMNQFSTLILDEPTVNLDEYRRKELIDVIRSAIEIVPQIILVTHDQELIQAGDYIIRVEKKGDTSKVEVSSYDR</sequence>
<accession>O33600</accession>
<accession>Q4JCJ8</accession>
<dbReference type="EMBL" id="Y10687">
    <property type="protein sequence ID" value="CAA71688.1"/>
    <property type="molecule type" value="Genomic_DNA"/>
</dbReference>
<dbReference type="EMBL" id="AJ437617">
    <property type="protein sequence ID" value="CAD26845.1"/>
    <property type="molecule type" value="Genomic_DNA"/>
</dbReference>
<dbReference type="EMBL" id="CP000077">
    <property type="protein sequence ID" value="AAY79481.1"/>
    <property type="molecule type" value="Genomic_DNA"/>
</dbReference>
<dbReference type="RefSeq" id="WP_011276982.1">
    <property type="nucleotide sequence ID" value="NC_007181.1"/>
</dbReference>
<dbReference type="SMR" id="O33600"/>
<dbReference type="STRING" id="330779.Saci_0051"/>
<dbReference type="GeneID" id="14550583"/>
<dbReference type="GeneID" id="78440407"/>
<dbReference type="KEGG" id="sai:Saci_0051"/>
<dbReference type="PATRIC" id="fig|330779.12.peg.48"/>
<dbReference type="eggNOG" id="arCOG00368">
    <property type="taxonomic scope" value="Archaea"/>
</dbReference>
<dbReference type="HOGENOM" id="CLU_004785_0_2_2"/>
<dbReference type="Proteomes" id="UP000001018">
    <property type="component" value="Chromosome"/>
</dbReference>
<dbReference type="GO" id="GO:0005524">
    <property type="term" value="F:ATP binding"/>
    <property type="evidence" value="ECO:0007669"/>
    <property type="project" value="UniProtKB-UniRule"/>
</dbReference>
<dbReference type="GO" id="GO:0016887">
    <property type="term" value="F:ATP hydrolysis activity"/>
    <property type="evidence" value="ECO:0007669"/>
    <property type="project" value="UniProtKB-UniRule"/>
</dbReference>
<dbReference type="GO" id="GO:0008270">
    <property type="term" value="F:zinc ion binding"/>
    <property type="evidence" value="ECO:0007669"/>
    <property type="project" value="UniProtKB-UniRule"/>
</dbReference>
<dbReference type="GO" id="GO:0006302">
    <property type="term" value="P:double-strand break repair"/>
    <property type="evidence" value="ECO:0007669"/>
    <property type="project" value="UniProtKB-UniRule"/>
</dbReference>
<dbReference type="Gene3D" id="1.10.287.510">
    <property type="entry name" value="Helix hairpin bin"/>
    <property type="match status" value="1"/>
</dbReference>
<dbReference type="Gene3D" id="3.40.50.300">
    <property type="entry name" value="P-loop containing nucleotide triphosphate hydrolases"/>
    <property type="match status" value="2"/>
</dbReference>
<dbReference type="HAMAP" id="MF_00449">
    <property type="entry name" value="RAD50"/>
    <property type="match status" value="1"/>
</dbReference>
<dbReference type="InterPro" id="IPR027417">
    <property type="entry name" value="P-loop_NTPase"/>
</dbReference>
<dbReference type="InterPro" id="IPR038729">
    <property type="entry name" value="Rad50/SbcC_AAA"/>
</dbReference>
<dbReference type="InterPro" id="IPR022982">
    <property type="entry name" value="Rad50_ATPase_archaeal"/>
</dbReference>
<dbReference type="InterPro" id="IPR054990">
    <property type="entry name" value="Rad50_ATPase_DNA_repair"/>
</dbReference>
<dbReference type="InterPro" id="IPR003395">
    <property type="entry name" value="RecF/RecN/SMC_N"/>
</dbReference>
<dbReference type="InterPro" id="IPR013134">
    <property type="entry name" value="Zn_hook_RAD50"/>
</dbReference>
<dbReference type="NCBIfam" id="NF041034">
    <property type="entry name" value="Rad50_Sulf"/>
    <property type="match status" value="1"/>
</dbReference>
<dbReference type="PANTHER" id="PTHR32114">
    <property type="entry name" value="ABC TRANSPORTER ABCH.3"/>
    <property type="match status" value="1"/>
</dbReference>
<dbReference type="PANTHER" id="PTHR32114:SF2">
    <property type="entry name" value="ABC TRANSPORTER ABCH.3"/>
    <property type="match status" value="1"/>
</dbReference>
<dbReference type="Pfam" id="PF13476">
    <property type="entry name" value="AAA_23"/>
    <property type="match status" value="1"/>
</dbReference>
<dbReference type="Pfam" id="PF04423">
    <property type="entry name" value="Rad50_zn_hook"/>
    <property type="match status" value="1"/>
</dbReference>
<dbReference type="Pfam" id="PF02463">
    <property type="entry name" value="SMC_N"/>
    <property type="match status" value="1"/>
</dbReference>
<dbReference type="SUPFAM" id="SSF52540">
    <property type="entry name" value="P-loop containing nucleoside triphosphate hydrolases"/>
    <property type="match status" value="3"/>
</dbReference>
<dbReference type="SUPFAM" id="SSF75712">
    <property type="entry name" value="Rad50 coiled-coil Zn hook"/>
    <property type="match status" value="1"/>
</dbReference>
<dbReference type="PROSITE" id="PS51131">
    <property type="entry name" value="ZN_HOOK"/>
    <property type="match status" value="1"/>
</dbReference>
<protein>
    <recommendedName>
        <fullName evidence="1">DNA double-strand break repair Rad50 ATPase</fullName>
    </recommendedName>
</protein>
<feature type="chain" id="PRO_0000138664" description="DNA double-strand break repair Rad50 ATPase">
    <location>
        <begin position="1"/>
        <end position="886"/>
    </location>
</feature>
<feature type="domain" description="Zinc-hook" evidence="1">
    <location>
        <begin position="391"/>
        <end position="489"/>
    </location>
</feature>
<feature type="coiled-coil region" evidence="1">
    <location>
        <begin position="181"/>
        <end position="240"/>
    </location>
</feature>
<feature type="coiled-coil region" evidence="1">
    <location>
        <begin position="320"/>
        <end position="416"/>
    </location>
</feature>
<feature type="coiled-coil region" evidence="1">
    <location>
        <begin position="450"/>
        <end position="657"/>
    </location>
</feature>
<feature type="coiled-coil region" evidence="1">
    <location>
        <begin position="682"/>
        <end position="718"/>
    </location>
</feature>
<feature type="binding site" evidence="1">
    <location>
        <begin position="32"/>
        <end position="38"/>
    </location>
    <ligand>
        <name>ATP</name>
        <dbReference type="ChEBI" id="CHEBI:30616"/>
    </ligand>
</feature>
<feature type="binding site" evidence="1">
    <location>
        <position position="137"/>
    </location>
    <ligand>
        <name>ATP</name>
        <dbReference type="ChEBI" id="CHEBI:30616"/>
    </ligand>
</feature>
<feature type="binding site" evidence="1">
    <location>
        <position position="437"/>
    </location>
    <ligand>
        <name>Zn(2+)</name>
        <dbReference type="ChEBI" id="CHEBI:29105"/>
    </ligand>
</feature>
<feature type="binding site" evidence="1">
    <location>
        <position position="440"/>
    </location>
    <ligand>
        <name>Zn(2+)</name>
        <dbReference type="ChEBI" id="CHEBI:29105"/>
    </ligand>
</feature>